<evidence type="ECO:0000255" key="1">
    <source>
        <dbReference type="HAMAP-Rule" id="MF_01320"/>
    </source>
</evidence>
<evidence type="ECO:0000256" key="2">
    <source>
        <dbReference type="SAM" id="MobiDB-lite"/>
    </source>
</evidence>
<evidence type="ECO:0000305" key="3"/>
<reference key="1">
    <citation type="journal article" date="2003" name="Proc. Natl. Acad. Sci. U.S.A.">
        <title>The complete genome sequence of the carcinogenic bacterium Helicobacter hepaticus.</title>
        <authorList>
            <person name="Suerbaum S."/>
            <person name="Josenhans C."/>
            <person name="Sterzenbach T."/>
            <person name="Drescher B."/>
            <person name="Brandt P."/>
            <person name="Bell M."/>
            <person name="Droege M."/>
            <person name="Fartmann B."/>
            <person name="Fischer H.-P."/>
            <person name="Ge Z."/>
            <person name="Hoerster A."/>
            <person name="Holland R."/>
            <person name="Klein K."/>
            <person name="Koenig J."/>
            <person name="Macko L."/>
            <person name="Mendz G.L."/>
            <person name="Nyakatura G."/>
            <person name="Schauer D.B."/>
            <person name="Shen Z."/>
            <person name="Weber J."/>
            <person name="Frosch M."/>
            <person name="Fox J.G."/>
        </authorList>
    </citation>
    <scope>NUCLEOTIDE SEQUENCE [LARGE SCALE GENOMIC DNA]</scope>
    <source>
        <strain>ATCC 51449 / 3B1</strain>
    </source>
</reference>
<organism>
    <name type="scientific">Helicobacter hepaticus (strain ATCC 51449 / 3B1)</name>
    <dbReference type="NCBI Taxonomy" id="235279"/>
    <lineage>
        <taxon>Bacteria</taxon>
        <taxon>Pseudomonadati</taxon>
        <taxon>Campylobacterota</taxon>
        <taxon>Epsilonproteobacteria</taxon>
        <taxon>Campylobacterales</taxon>
        <taxon>Helicobacteraceae</taxon>
        <taxon>Helicobacter</taxon>
    </lineage>
</organism>
<protein>
    <recommendedName>
        <fullName evidence="1">Large ribosomal subunit protein uL2</fullName>
    </recommendedName>
    <alternativeName>
        <fullName evidence="3">50S ribosomal protein L2</fullName>
    </alternativeName>
</protein>
<keyword id="KW-1185">Reference proteome</keyword>
<keyword id="KW-0687">Ribonucleoprotein</keyword>
<keyword id="KW-0689">Ribosomal protein</keyword>
<keyword id="KW-0694">RNA-binding</keyword>
<keyword id="KW-0699">rRNA-binding</keyword>
<proteinExistence type="inferred from homology"/>
<accession>Q7VGE1</accession>
<comment type="function">
    <text evidence="1">One of the primary rRNA binding proteins. Required for association of the 30S and 50S subunits to form the 70S ribosome, for tRNA binding and peptide bond formation. It has been suggested to have peptidyltransferase activity; this is somewhat controversial. Makes several contacts with the 16S rRNA in the 70S ribosome.</text>
</comment>
<comment type="subunit">
    <text evidence="1">Part of the 50S ribosomal subunit. Forms a bridge to the 30S subunit in the 70S ribosome.</text>
</comment>
<comment type="similarity">
    <text evidence="1">Belongs to the universal ribosomal protein uL2 family.</text>
</comment>
<name>RL2_HELHP</name>
<gene>
    <name evidence="1" type="primary">rplB</name>
    <name type="ordered locus">HH_1381</name>
</gene>
<feature type="chain" id="PRO_0000129568" description="Large ribosomal subunit protein uL2">
    <location>
        <begin position="1"/>
        <end position="275"/>
    </location>
</feature>
<feature type="region of interest" description="Disordered" evidence="2">
    <location>
        <begin position="210"/>
        <end position="275"/>
    </location>
</feature>
<feature type="compositionally biased region" description="Basic residues" evidence="2">
    <location>
        <begin position="257"/>
        <end position="275"/>
    </location>
</feature>
<sequence length="275" mass="29986">MAVKTYKPYTPSRRFMSNLSSSDITGKASVKSLLIKLPVSAGRNNNGRITSRHKEGGAKKFYRIIDFKRNKFNIQGKVAAIEYDPYRNCRIALIHYVDGEKRYIIQPSGLKVGDVVFSASSGLDIKTGFAMKLKSMPIGTIVHNIEMHPGAGGALARSAGTSAQIMGREGKYIILRMPSGEMRYILEECMATIGVVGNEDFANISIGKAGRNRHRGIRPQTRGSAMNPVDHPHGGGEGKTGSSGHPVSPWGTPAKGFKTRKKKASDKLIISRKKK</sequence>
<dbReference type="EMBL" id="AE017125">
    <property type="protein sequence ID" value="AAP77978.1"/>
    <property type="molecule type" value="Genomic_DNA"/>
</dbReference>
<dbReference type="RefSeq" id="WP_011116221.1">
    <property type="nucleotide sequence ID" value="NC_004917.1"/>
</dbReference>
<dbReference type="SMR" id="Q7VGE1"/>
<dbReference type="STRING" id="235279.HH_1381"/>
<dbReference type="KEGG" id="hhe:HH_1381"/>
<dbReference type="eggNOG" id="COG0090">
    <property type="taxonomic scope" value="Bacteria"/>
</dbReference>
<dbReference type="HOGENOM" id="CLU_036235_2_1_7"/>
<dbReference type="OrthoDB" id="9778722at2"/>
<dbReference type="Proteomes" id="UP000002495">
    <property type="component" value="Chromosome"/>
</dbReference>
<dbReference type="GO" id="GO:0015934">
    <property type="term" value="C:large ribosomal subunit"/>
    <property type="evidence" value="ECO:0007669"/>
    <property type="project" value="InterPro"/>
</dbReference>
<dbReference type="GO" id="GO:0019843">
    <property type="term" value="F:rRNA binding"/>
    <property type="evidence" value="ECO:0007669"/>
    <property type="project" value="UniProtKB-UniRule"/>
</dbReference>
<dbReference type="GO" id="GO:0003735">
    <property type="term" value="F:structural constituent of ribosome"/>
    <property type="evidence" value="ECO:0007669"/>
    <property type="project" value="InterPro"/>
</dbReference>
<dbReference type="GO" id="GO:0016740">
    <property type="term" value="F:transferase activity"/>
    <property type="evidence" value="ECO:0007669"/>
    <property type="project" value="InterPro"/>
</dbReference>
<dbReference type="GO" id="GO:0002181">
    <property type="term" value="P:cytoplasmic translation"/>
    <property type="evidence" value="ECO:0007669"/>
    <property type="project" value="TreeGrafter"/>
</dbReference>
<dbReference type="FunFam" id="2.30.30.30:FF:000001">
    <property type="entry name" value="50S ribosomal protein L2"/>
    <property type="match status" value="1"/>
</dbReference>
<dbReference type="FunFam" id="2.40.50.140:FF:000003">
    <property type="entry name" value="50S ribosomal protein L2"/>
    <property type="match status" value="1"/>
</dbReference>
<dbReference type="FunFam" id="4.10.950.10:FF:000001">
    <property type="entry name" value="50S ribosomal protein L2"/>
    <property type="match status" value="1"/>
</dbReference>
<dbReference type="Gene3D" id="2.30.30.30">
    <property type="match status" value="1"/>
</dbReference>
<dbReference type="Gene3D" id="2.40.50.140">
    <property type="entry name" value="Nucleic acid-binding proteins"/>
    <property type="match status" value="1"/>
</dbReference>
<dbReference type="Gene3D" id="4.10.950.10">
    <property type="entry name" value="Ribosomal protein L2, domain 3"/>
    <property type="match status" value="1"/>
</dbReference>
<dbReference type="HAMAP" id="MF_01320_B">
    <property type="entry name" value="Ribosomal_uL2_B"/>
    <property type="match status" value="1"/>
</dbReference>
<dbReference type="InterPro" id="IPR012340">
    <property type="entry name" value="NA-bd_OB-fold"/>
</dbReference>
<dbReference type="InterPro" id="IPR014722">
    <property type="entry name" value="Rib_uL2_dom2"/>
</dbReference>
<dbReference type="InterPro" id="IPR002171">
    <property type="entry name" value="Ribosomal_uL2"/>
</dbReference>
<dbReference type="InterPro" id="IPR005880">
    <property type="entry name" value="Ribosomal_uL2_bac/org-type"/>
</dbReference>
<dbReference type="InterPro" id="IPR022669">
    <property type="entry name" value="Ribosomal_uL2_C"/>
</dbReference>
<dbReference type="InterPro" id="IPR022671">
    <property type="entry name" value="Ribosomal_uL2_CS"/>
</dbReference>
<dbReference type="InterPro" id="IPR014726">
    <property type="entry name" value="Ribosomal_uL2_dom3"/>
</dbReference>
<dbReference type="InterPro" id="IPR022666">
    <property type="entry name" value="Ribosomal_uL2_RNA-bd_dom"/>
</dbReference>
<dbReference type="InterPro" id="IPR008991">
    <property type="entry name" value="Translation_prot_SH3-like_sf"/>
</dbReference>
<dbReference type="NCBIfam" id="TIGR01171">
    <property type="entry name" value="rplB_bact"/>
    <property type="match status" value="1"/>
</dbReference>
<dbReference type="PANTHER" id="PTHR13691:SF5">
    <property type="entry name" value="LARGE RIBOSOMAL SUBUNIT PROTEIN UL2M"/>
    <property type="match status" value="1"/>
</dbReference>
<dbReference type="PANTHER" id="PTHR13691">
    <property type="entry name" value="RIBOSOMAL PROTEIN L2"/>
    <property type="match status" value="1"/>
</dbReference>
<dbReference type="Pfam" id="PF00181">
    <property type="entry name" value="Ribosomal_L2"/>
    <property type="match status" value="1"/>
</dbReference>
<dbReference type="Pfam" id="PF03947">
    <property type="entry name" value="Ribosomal_L2_C"/>
    <property type="match status" value="1"/>
</dbReference>
<dbReference type="PIRSF" id="PIRSF002158">
    <property type="entry name" value="Ribosomal_L2"/>
    <property type="match status" value="1"/>
</dbReference>
<dbReference type="SMART" id="SM01383">
    <property type="entry name" value="Ribosomal_L2"/>
    <property type="match status" value="1"/>
</dbReference>
<dbReference type="SMART" id="SM01382">
    <property type="entry name" value="Ribosomal_L2_C"/>
    <property type="match status" value="1"/>
</dbReference>
<dbReference type="SUPFAM" id="SSF50249">
    <property type="entry name" value="Nucleic acid-binding proteins"/>
    <property type="match status" value="1"/>
</dbReference>
<dbReference type="SUPFAM" id="SSF50104">
    <property type="entry name" value="Translation proteins SH3-like domain"/>
    <property type="match status" value="1"/>
</dbReference>
<dbReference type="PROSITE" id="PS00467">
    <property type="entry name" value="RIBOSOMAL_L2"/>
    <property type="match status" value="1"/>
</dbReference>